<feature type="chain" id="PRO_0000099371" description="Protein B17">
    <location>
        <begin position="1"/>
        <end position="340"/>
    </location>
</feature>
<sequence>MSRKFMQVYEYDREQYLDEFIEDRYNDSFIASPEYYSAEKYMCRYTILNHNCVNVRRCALDSKLLHDIITNCKIYNNIELVRATKFVYYLDLIKCNWVSKVGDSVLYPVIFITHTSTRNLDKVSVKTYKGVKVKKLNRCADHAIVINPFVKFKLTLPNKTSHAKVLVTFCKLRTDIMPIEAPYPGNVLVYTFPDIHKRIPGYIHINIEGCIDGIIYINSSKFSCVLKLHRSMYRIPPFPIDICSCCSQYTNDDIEIPIHDLIKDVVIFKNKEMVYYLKLNNKTIARFTYFNNIDTAITQEHKYVKIALGIVCKLMINNMHSIVGVNHSNTFVNCLLEDNV</sequence>
<gene>
    <name type="ORF">B15L</name>
    <name type="ORF">B17L</name>
    <name type="ORF">B18L</name>
</gene>
<comment type="similarity">
    <text evidence="1">Belongs to the orthopoxvirus B17 protein family.</text>
</comment>
<organism>
    <name type="scientific">Variola virus (isolate Human/India/Ind3/1967)</name>
    <name type="common">VARV</name>
    <name type="synonym">Smallpox virus</name>
    <dbReference type="NCBI Taxonomy" id="587200"/>
    <lineage>
        <taxon>Viruses</taxon>
        <taxon>Varidnaviria</taxon>
        <taxon>Bamfordvirae</taxon>
        <taxon>Nucleocytoviricota</taxon>
        <taxon>Pokkesviricetes</taxon>
        <taxon>Chitovirales</taxon>
        <taxon>Poxviridae</taxon>
        <taxon>Chordopoxvirinae</taxon>
        <taxon>Orthopoxvirus</taxon>
        <taxon>Variola virus</taxon>
    </lineage>
</organism>
<evidence type="ECO:0000305" key="1"/>
<reference key="1">
    <citation type="journal article" date="1991" name="Dokl. Akad. Nauk SSSR">
        <title>Creation of a clone library of fragments from the natural variola virus and study of the structural and functional organization of viral genes from a circle of hosts.</title>
        <authorList>
            <person name="Shchelkunov S.N."/>
            <person name="Marennikova S.S."/>
            <person name="Totmenin A.V."/>
            <person name="Blinov V.M."/>
            <person name="Chizhikov V.E."/>
            <person name="Gutorov V.V."/>
            <person name="Safronov P.F."/>
            <person name="Pozdnyakov S.G."/>
            <person name="Shelukhina E.M."/>
            <person name="Gashnikov P.V."/>
            <person name="Anjaparidze O.G."/>
            <person name="Sandakhchiev L.S."/>
        </authorList>
    </citation>
    <scope>NUCLEOTIDE SEQUENCE [GENOMIC DNA]</scope>
</reference>
<reference key="2">
    <citation type="journal article" date="1993" name="FEBS Lett.">
        <title>Genes of variola and vaccinia viruses necessary to overcome the host protective mechanisms.</title>
        <authorList>
            <person name="Shchelkunov S.N."/>
            <person name="Blinov V.M."/>
            <person name="Sandakhchiev L.S."/>
        </authorList>
    </citation>
    <scope>NUCLEOTIDE SEQUENCE [GENOMIC DNA]</scope>
</reference>
<dbReference type="EMBL" id="X69198">
    <property type="protein sequence ID" value="CAA49127.1"/>
    <property type="molecule type" value="Genomic_DNA"/>
</dbReference>
<dbReference type="EMBL" id="X67117">
    <property type="protein sequence ID" value="CAA47527.1"/>
    <property type="molecule type" value="Genomic_DNA"/>
</dbReference>
<dbReference type="PIR" id="I36856">
    <property type="entry name" value="I36856"/>
</dbReference>
<dbReference type="RefSeq" id="NP_042230.1">
    <property type="nucleotide sequence ID" value="NC_001611.1"/>
</dbReference>
<dbReference type="GeneID" id="1486548"/>
<dbReference type="KEGG" id="vg:1486548"/>
<dbReference type="Proteomes" id="UP000002060">
    <property type="component" value="Segment"/>
</dbReference>
<dbReference type="InterPro" id="IPR009633">
    <property type="entry name" value="Vaccinia_virus_B17"/>
</dbReference>
<dbReference type="Pfam" id="PF06802">
    <property type="entry name" value="DUF1231"/>
    <property type="match status" value="1"/>
</dbReference>
<protein>
    <recommendedName>
        <fullName>Protein B17</fullName>
    </recommendedName>
</protein>
<keyword id="KW-1185">Reference proteome</keyword>
<proteinExistence type="inferred from homology"/>
<organismHost>
    <name type="scientific">Homo sapiens</name>
    <name type="common">Human</name>
    <dbReference type="NCBI Taxonomy" id="9606"/>
</organismHost>
<name>B17_VAR67</name>
<accession>P0DOT1</accession>
<accession>P33878</accession>